<keyword id="KW-0274">FAD</keyword>
<keyword id="KW-0285">Flavoprotein</keyword>
<keyword id="KW-0560">Oxidoreductase</keyword>
<keyword id="KW-1185">Reference proteome</keyword>
<name>P2OX_EMENI</name>
<evidence type="ECO:0000250" key="1"/>
<evidence type="ECO:0000250" key="2">
    <source>
        <dbReference type="UniProtKB" id="E4QP00"/>
    </source>
</evidence>
<evidence type="ECO:0000256" key="3">
    <source>
        <dbReference type="SAM" id="MobiDB-lite"/>
    </source>
</evidence>
<evidence type="ECO:0000305" key="4"/>
<accession>Q5B2E9</accession>
<accession>C8VH04</accession>
<sequence>MQYSRMTATRENPKYKNLRVEECDVLIIGSGPVGATYAREILDPGSGASPGRKAPKVIMVETGAQESKVPGEHKKNAVVYQKHIDSFVNVIQGSLFATSVPTRVDPNLKLPPVSWSPREKQNFNGQNKEQNIYHNLDANGVSRNVGGMSTHWTCATPRQHELERSKIFDDATWDRLYKRAEELIGTRTDVLDQSIRQRLVLDILRKKFKNRDAKALPLAAEKVEGKNLIKWSSSSTVLGNLLEDEKFTLLDQHHCEKLEFNDETNKVSFAIIKNLAKPQTSKEDEDRLRIKAKYVIVCGGPILTPQLLFKSGFRYDEEDAEDSEGNKSSLYIPALGRNLTEQTMCFCQIVLKDKWVEELQKNNWGPECEEHRRKYDEEDDPLRIPFDDLDPQVTLPFTENTPWHTQIHRDAFSYGAVPPAIDKRTIVDLRYFGRAETQWRNRVTFSKKLTDAYGMPQPTFDFKLSTKDRLESHRMMQDMEKVAGELGGYLPGSEPQFLAPGLALHVCGTTAALRKGCRSEDEMKRISVCDENSKVWGVENLHLGGLNVIPGPRSNASNPTLTAMCFAIKGAEEIRRKLGKKGSHSGNRDDGDVDTDTDDDA</sequence>
<feature type="chain" id="PRO_0000205612" description="Pyranose 2-oxidase">
    <location>
        <begin position="1"/>
        <end position="601"/>
    </location>
</feature>
<feature type="region of interest" description="Disordered" evidence="3">
    <location>
        <begin position="577"/>
        <end position="601"/>
    </location>
</feature>
<feature type="compositionally biased region" description="Acidic residues" evidence="3">
    <location>
        <begin position="591"/>
        <end position="601"/>
    </location>
</feature>
<feature type="active site" description="Proton acceptor" evidence="2">
    <location>
        <position position="505"/>
    </location>
</feature>
<feature type="active site" evidence="1">
    <location>
        <position position="558"/>
    </location>
</feature>
<feature type="binding site" evidence="1">
    <location>
        <position position="406"/>
    </location>
    <ligand>
        <name>substrate</name>
    </ligand>
</feature>
<feature type="binding site" evidence="1">
    <location>
        <position position="408"/>
    </location>
    <ligand>
        <name>substrate</name>
    </ligand>
</feature>
<feature type="modified residue" description="Tele-8alpha-FAD histidine" evidence="1">
    <location>
        <position position="151"/>
    </location>
</feature>
<gene>
    <name type="primary">p2ox</name>
    <name type="ORF">AN5281</name>
</gene>
<reference key="1">
    <citation type="journal article" date="2005" name="Nature">
        <title>Sequencing of Aspergillus nidulans and comparative analysis with A. fumigatus and A. oryzae.</title>
        <authorList>
            <person name="Galagan J.E."/>
            <person name="Calvo S.E."/>
            <person name="Cuomo C."/>
            <person name="Ma L.-J."/>
            <person name="Wortman J.R."/>
            <person name="Batzoglou S."/>
            <person name="Lee S.-I."/>
            <person name="Bastuerkmen M."/>
            <person name="Spevak C.C."/>
            <person name="Clutterbuck J."/>
            <person name="Kapitonov V."/>
            <person name="Jurka J."/>
            <person name="Scazzocchio C."/>
            <person name="Farman M.L."/>
            <person name="Butler J."/>
            <person name="Purcell S."/>
            <person name="Harris S."/>
            <person name="Braus G.H."/>
            <person name="Draht O."/>
            <person name="Busch S."/>
            <person name="D'Enfert C."/>
            <person name="Bouchier C."/>
            <person name="Goldman G.H."/>
            <person name="Bell-Pedersen D."/>
            <person name="Griffiths-Jones S."/>
            <person name="Doonan J.H."/>
            <person name="Yu J."/>
            <person name="Vienken K."/>
            <person name="Pain A."/>
            <person name="Freitag M."/>
            <person name="Selker E.U."/>
            <person name="Archer D.B."/>
            <person name="Penalva M.A."/>
            <person name="Oakley B.R."/>
            <person name="Momany M."/>
            <person name="Tanaka T."/>
            <person name="Kumagai T."/>
            <person name="Asai K."/>
            <person name="Machida M."/>
            <person name="Nierman W.C."/>
            <person name="Denning D.W."/>
            <person name="Caddick M.X."/>
            <person name="Hynes M."/>
            <person name="Paoletti M."/>
            <person name="Fischer R."/>
            <person name="Miller B.L."/>
            <person name="Dyer P.S."/>
            <person name="Sachs M.S."/>
            <person name="Osmani S.A."/>
            <person name="Birren B.W."/>
        </authorList>
    </citation>
    <scope>NUCLEOTIDE SEQUENCE [LARGE SCALE GENOMIC DNA]</scope>
    <source>
        <strain>FGSC A4 / ATCC 38163 / CBS 112.46 / NRRL 194 / M139</strain>
    </source>
</reference>
<reference key="2">
    <citation type="journal article" date="2009" name="Fungal Genet. Biol.">
        <title>The 2008 update of the Aspergillus nidulans genome annotation: a community effort.</title>
        <authorList>
            <person name="Wortman J.R."/>
            <person name="Gilsenan J.M."/>
            <person name="Joardar V."/>
            <person name="Deegan J."/>
            <person name="Clutterbuck J."/>
            <person name="Andersen M.R."/>
            <person name="Archer D."/>
            <person name="Bencina M."/>
            <person name="Braus G."/>
            <person name="Coutinho P."/>
            <person name="von Dohren H."/>
            <person name="Doonan J."/>
            <person name="Driessen A.J."/>
            <person name="Durek P."/>
            <person name="Espeso E."/>
            <person name="Fekete E."/>
            <person name="Flipphi M."/>
            <person name="Estrada C.G."/>
            <person name="Geysens S."/>
            <person name="Goldman G."/>
            <person name="de Groot P.W."/>
            <person name="Hansen K."/>
            <person name="Harris S.D."/>
            <person name="Heinekamp T."/>
            <person name="Helmstaedt K."/>
            <person name="Henrissat B."/>
            <person name="Hofmann G."/>
            <person name="Homan T."/>
            <person name="Horio T."/>
            <person name="Horiuchi H."/>
            <person name="James S."/>
            <person name="Jones M."/>
            <person name="Karaffa L."/>
            <person name="Karanyi Z."/>
            <person name="Kato M."/>
            <person name="Keller N."/>
            <person name="Kelly D.E."/>
            <person name="Kiel J.A."/>
            <person name="Kim J.M."/>
            <person name="van der Klei I.J."/>
            <person name="Klis F.M."/>
            <person name="Kovalchuk A."/>
            <person name="Krasevec N."/>
            <person name="Kubicek C.P."/>
            <person name="Liu B."/>
            <person name="Maccabe A."/>
            <person name="Meyer V."/>
            <person name="Mirabito P."/>
            <person name="Miskei M."/>
            <person name="Mos M."/>
            <person name="Mullins J."/>
            <person name="Nelson D.R."/>
            <person name="Nielsen J."/>
            <person name="Oakley B.R."/>
            <person name="Osmani S.A."/>
            <person name="Pakula T."/>
            <person name="Paszewski A."/>
            <person name="Paulsen I."/>
            <person name="Pilsyk S."/>
            <person name="Pocsi I."/>
            <person name="Punt P.J."/>
            <person name="Ram A.F."/>
            <person name="Ren Q."/>
            <person name="Robellet X."/>
            <person name="Robson G."/>
            <person name="Seiboth B."/>
            <person name="van Solingen P."/>
            <person name="Specht T."/>
            <person name="Sun J."/>
            <person name="Taheri-Talesh N."/>
            <person name="Takeshita N."/>
            <person name="Ussery D."/>
            <person name="vanKuyk P.A."/>
            <person name="Visser H."/>
            <person name="van de Vondervoort P.J."/>
            <person name="de Vries R.P."/>
            <person name="Walton J."/>
            <person name="Xiang X."/>
            <person name="Xiong Y."/>
            <person name="Zeng A.P."/>
            <person name="Brandt B.W."/>
            <person name="Cornell M.J."/>
            <person name="van den Hondel C.A."/>
            <person name="Visser J."/>
            <person name="Oliver S.G."/>
            <person name="Turner G."/>
        </authorList>
    </citation>
    <scope>GENOME REANNOTATION</scope>
    <source>
        <strain>FGSC A4 / ATCC 38163 / CBS 112.46 / NRRL 194 / M139</strain>
    </source>
</reference>
<proteinExistence type="inferred from homology"/>
<protein>
    <recommendedName>
        <fullName>Pyranose 2-oxidase</fullName>
        <shortName>P2Ox</shortName>
        <shortName>POD</shortName>
        <shortName>POx</shortName>
        <shortName>PROD</shortName>
        <shortName>Pyranose oxidase</shortName>
        <ecNumber>1.1.3.10</ecNumber>
    </recommendedName>
    <alternativeName>
        <fullName>FAD-oxidoreductase</fullName>
    </alternativeName>
    <alternativeName>
        <fullName>Glucose 2-oxidase</fullName>
    </alternativeName>
    <alternativeName>
        <fullName>Pyranose:oxygen 2-oxidoreductase</fullName>
    </alternativeName>
</protein>
<comment type="function">
    <text evidence="1">Catalyzes the oxidation of various aldopyranoses and disaccharides on carbon-2 to the corresponding 2-keto sugars concomitant with the reduction of O(2) to H(2)O(2).</text>
</comment>
<comment type="catalytic activity">
    <reaction>
        <text>D-glucose + O2 = 2-dehydro-D-glucose + H2O2</text>
        <dbReference type="Rhea" id="RHEA:10552"/>
        <dbReference type="ChEBI" id="CHEBI:4167"/>
        <dbReference type="ChEBI" id="CHEBI:15379"/>
        <dbReference type="ChEBI" id="CHEBI:16240"/>
        <dbReference type="ChEBI" id="CHEBI:16609"/>
        <dbReference type="EC" id="1.1.3.10"/>
    </reaction>
</comment>
<comment type="cofactor">
    <cofactor evidence="1">
        <name>FAD</name>
        <dbReference type="ChEBI" id="CHEBI:57692"/>
    </cofactor>
    <text evidence="1">Binds 1 FAD covalently per subunit.</text>
</comment>
<comment type="subunit">
    <text evidence="1">Homotetramer.</text>
</comment>
<comment type="similarity">
    <text evidence="4">Belongs to the GMC oxidoreductase family.</text>
</comment>
<comment type="sequence caution" evidence="4">
    <conflict type="erroneous gene model prediction">
        <sequence resource="EMBL-CDS" id="EAA62441"/>
    </conflict>
</comment>
<dbReference type="EC" id="1.1.3.10"/>
<dbReference type="EMBL" id="AACD01000093">
    <property type="protein sequence ID" value="EAA62441.1"/>
    <property type="status" value="ALT_SEQ"/>
    <property type="molecule type" value="Genomic_DNA"/>
</dbReference>
<dbReference type="EMBL" id="BN001305">
    <property type="protein sequence ID" value="CBF82183.1"/>
    <property type="molecule type" value="Genomic_DNA"/>
</dbReference>
<dbReference type="RefSeq" id="XP_662885.1">
    <property type="nucleotide sequence ID" value="XM_657793.1"/>
</dbReference>
<dbReference type="SMR" id="Q5B2E9"/>
<dbReference type="STRING" id="227321.Q5B2E9"/>
<dbReference type="CAZy" id="AA3">
    <property type="family name" value="Auxiliary Activities 3"/>
</dbReference>
<dbReference type="EnsemblFungi" id="CBF82183">
    <property type="protein sequence ID" value="CBF82183"/>
    <property type="gene ID" value="ANIA_05281"/>
</dbReference>
<dbReference type="VEuPathDB" id="FungiDB:AN5281"/>
<dbReference type="eggNOG" id="ENOG502R261">
    <property type="taxonomic scope" value="Eukaryota"/>
</dbReference>
<dbReference type="HOGENOM" id="CLU_023699_0_0_1"/>
<dbReference type="InParanoid" id="Q5B2E9"/>
<dbReference type="OMA" id="CCDENSK"/>
<dbReference type="OrthoDB" id="269227at2759"/>
<dbReference type="Proteomes" id="UP000000560">
    <property type="component" value="Chromosome V"/>
</dbReference>
<dbReference type="GO" id="GO:0050660">
    <property type="term" value="F:flavin adenine dinucleotide binding"/>
    <property type="evidence" value="ECO:0007669"/>
    <property type="project" value="InterPro"/>
</dbReference>
<dbReference type="GO" id="GO:0050233">
    <property type="term" value="F:pyranose oxidase activity"/>
    <property type="evidence" value="ECO:0007669"/>
    <property type="project" value="UniProtKB-EC"/>
</dbReference>
<dbReference type="GO" id="GO:0044550">
    <property type="term" value="P:secondary metabolite biosynthetic process"/>
    <property type="evidence" value="ECO:0007669"/>
    <property type="project" value="UniProtKB-ARBA"/>
</dbReference>
<dbReference type="Gene3D" id="3.50.50.60">
    <property type="entry name" value="FAD/NAD(P)-binding domain"/>
    <property type="match status" value="1"/>
</dbReference>
<dbReference type="InterPro" id="IPR036188">
    <property type="entry name" value="FAD/NAD-bd_sf"/>
</dbReference>
<dbReference type="InterPro" id="IPR000172">
    <property type="entry name" value="GMC_OxRdtase_N"/>
</dbReference>
<dbReference type="InterPro" id="IPR007867">
    <property type="entry name" value="GMC_OxRtase_C"/>
</dbReference>
<dbReference type="InterPro" id="IPR012814">
    <property type="entry name" value="P2OX"/>
</dbReference>
<dbReference type="InterPro" id="IPR051473">
    <property type="entry name" value="P2Ox-like"/>
</dbReference>
<dbReference type="NCBIfam" id="TIGR02462">
    <property type="entry name" value="pyranose_ox"/>
    <property type="match status" value="1"/>
</dbReference>
<dbReference type="PANTHER" id="PTHR42784">
    <property type="entry name" value="PYRANOSE 2-OXIDASE"/>
    <property type="match status" value="1"/>
</dbReference>
<dbReference type="PANTHER" id="PTHR42784:SF1">
    <property type="entry name" value="PYRANOSE 2-OXIDASE"/>
    <property type="match status" value="1"/>
</dbReference>
<dbReference type="Pfam" id="PF05199">
    <property type="entry name" value="GMC_oxred_C"/>
    <property type="match status" value="1"/>
</dbReference>
<dbReference type="Pfam" id="PF00732">
    <property type="entry name" value="GMC_oxred_N"/>
    <property type="match status" value="1"/>
</dbReference>
<dbReference type="SUPFAM" id="SSF54373">
    <property type="entry name" value="FAD-linked reductases, C-terminal domain"/>
    <property type="match status" value="1"/>
</dbReference>
<dbReference type="SUPFAM" id="SSF51905">
    <property type="entry name" value="FAD/NAD(P)-binding domain"/>
    <property type="match status" value="1"/>
</dbReference>
<organism>
    <name type="scientific">Emericella nidulans (strain FGSC A4 / ATCC 38163 / CBS 112.46 / NRRL 194 / M139)</name>
    <name type="common">Aspergillus nidulans</name>
    <dbReference type="NCBI Taxonomy" id="227321"/>
    <lineage>
        <taxon>Eukaryota</taxon>
        <taxon>Fungi</taxon>
        <taxon>Dikarya</taxon>
        <taxon>Ascomycota</taxon>
        <taxon>Pezizomycotina</taxon>
        <taxon>Eurotiomycetes</taxon>
        <taxon>Eurotiomycetidae</taxon>
        <taxon>Eurotiales</taxon>
        <taxon>Aspergillaceae</taxon>
        <taxon>Aspergillus</taxon>
        <taxon>Aspergillus subgen. Nidulantes</taxon>
    </lineage>
</organism>